<accession>P13845</accession>
<keyword id="KW-0024">Alternative initiation</keyword>
<keyword id="KW-0945">Host-virus interaction</keyword>
<keyword id="KW-0964">Secreted</keyword>
<keyword id="KW-0732">Signal</keyword>
<keyword id="KW-0899">Viral immunoevasion</keyword>
<dbReference type="EMBL" id="M22056">
    <property type="protein sequence ID" value="AAA45737.1"/>
    <property type="molecule type" value="Genomic_DNA"/>
</dbReference>
<dbReference type="PIR" id="C30082">
    <property type="entry name" value="NKVLHH"/>
</dbReference>
<dbReference type="RefSeq" id="NP_040997.1">
    <molecule id="P13845-1"/>
    <property type="nucleotide sequence ID" value="NC_001486.1"/>
</dbReference>
<dbReference type="SMR" id="P13845"/>
<dbReference type="KEGG" id="vg:2703544"/>
<dbReference type="OrthoDB" id="6634at10239"/>
<dbReference type="Proteomes" id="UP000008679">
    <property type="component" value="Genome"/>
</dbReference>
<dbReference type="GO" id="GO:0005576">
    <property type="term" value="C:extracellular region"/>
    <property type="evidence" value="ECO:0007669"/>
    <property type="project" value="UniProtKB-SubCell"/>
</dbReference>
<dbReference type="GO" id="GO:0005198">
    <property type="term" value="F:structural molecule activity"/>
    <property type="evidence" value="ECO:0007669"/>
    <property type="project" value="InterPro"/>
</dbReference>
<dbReference type="Gene3D" id="1.10.4090.10">
    <property type="entry name" value="Viral capsid, core domain supefamily, Hepatitis B virus"/>
    <property type="match status" value="2"/>
</dbReference>
<dbReference type="InterPro" id="IPR002006">
    <property type="entry name" value="Hepatitis_core"/>
</dbReference>
<dbReference type="InterPro" id="IPR036459">
    <property type="entry name" value="Viral_capsid_core_dom_sf_HBV"/>
</dbReference>
<dbReference type="Pfam" id="PF00906">
    <property type="entry name" value="Hepatitis_core"/>
    <property type="match status" value="1"/>
</dbReference>
<dbReference type="SUPFAM" id="SSF47852">
    <property type="entry name" value="Hepatitis B viral capsid (hbcag)"/>
    <property type="match status" value="1"/>
</dbReference>
<organism>
    <name type="scientific">Heron hepatitis B virus</name>
    <name type="common">HHBV</name>
    <dbReference type="NCBI Taxonomy" id="28300"/>
    <lineage>
        <taxon>Viruses</taxon>
        <taxon>Riboviria</taxon>
        <taxon>Pararnavirae</taxon>
        <taxon>Artverviricota</taxon>
        <taxon>Revtraviricetes</taxon>
        <taxon>Blubervirales</taxon>
        <taxon>Hepadnaviridae</taxon>
        <taxon>Avihepadnavirus</taxon>
    </lineage>
</organism>
<sequence length="305" mass="34925">MWSLRLHPSPFGAACQGIFTSTSLLFLVTVPLVCTIVYDSCLYMDVNASRALANVYDLPDDFFPQIDDLVRDAKDALEPYWKAETIKKHVLIATHFVDLIEDFWQTTQGMSQIADALRAVIPPTTVPVPEGFLITHSEAEEIPLNDLFSNQEERIVNFQPDYPITARIHTHLRVYTKLNEQALDKARRLLWWHYNCLLWGEATVTNYISRLRTWLSTPEKYRGKDAPTIEAITRPIQVAQGGRNQTKGTRKPRGLEPRRRKVKTTVVYGRRRSKSRGRRSSPSQRAGSPLPRNRGNQTRSPSPRE</sequence>
<gene>
    <name type="primary">C</name>
</gene>
<feature type="signal peptide" evidence="2">
    <location>
        <begin position="1"/>
        <end position="19"/>
    </location>
</feature>
<feature type="chain" id="PRO_0000222307" description="External core antigen">
    <location>
        <begin position="20"/>
        <end position="272"/>
    </location>
</feature>
<feature type="propeptide" id="PRO_0000324686" evidence="1">
    <location>
        <begin position="273"/>
        <end position="305"/>
    </location>
</feature>
<feature type="region of interest" description="Disordered" evidence="3">
    <location>
        <begin position="226"/>
        <end position="305"/>
    </location>
</feature>
<feature type="compositionally biased region" description="Basic residues" evidence="3">
    <location>
        <begin position="248"/>
        <end position="279"/>
    </location>
</feature>
<feature type="compositionally biased region" description="Polar residues" evidence="3">
    <location>
        <begin position="294"/>
        <end position="305"/>
    </location>
</feature>
<feature type="site" description="Cleavage; by host" evidence="1">
    <location>
        <begin position="272"/>
        <end position="273"/>
    </location>
</feature>
<proteinExistence type="inferred from homology"/>
<reference key="1">
    <citation type="journal article" date="1988" name="J. Virol.">
        <title>Isolation and characterization of a hepatitis B virus endemic in herons.</title>
        <authorList>
            <person name="Sprengel R."/>
            <person name="Kaleta E.F."/>
            <person name="Will H."/>
        </authorList>
    </citation>
    <scope>NUCLEOTIDE SEQUENCE [GENOMIC DNA]</scope>
</reference>
<evidence type="ECO:0000250" key="1"/>
<evidence type="ECO:0000255" key="2"/>
<evidence type="ECO:0000256" key="3">
    <source>
        <dbReference type="SAM" id="MobiDB-lite"/>
    </source>
</evidence>
<evidence type="ECO:0000305" key="4"/>
<comment type="function">
    <text evidence="1">May regulate immune response to the intracellular capsid in acting as a T-cell tolerogen, by having an immunoregulatory effect which prevents destruction of infected cells by cytotoxic T-cells.</text>
</comment>
<comment type="subunit">
    <text evidence="1">Homodimerizes.</text>
</comment>
<comment type="subcellular location">
    <subcellularLocation>
        <location evidence="1">Secreted</location>
    </subcellularLocation>
</comment>
<comment type="alternative products">
    <event type="alternative initiation"/>
    <isoform>
        <id>P13845-1</id>
        <name>External core antigen</name>
        <sequence type="displayed"/>
    </isoform>
    <isoform>
        <id>P0C6K0-1</id>
        <name>Capsid protein</name>
        <sequence type="external"/>
    </isoform>
</comment>
<comment type="similarity">
    <text evidence="4">Belongs to the avihepadnavirus precore antigen family.</text>
</comment>
<organismHost>
    <name type="scientific">Ardeidae</name>
    <name type="common">herons</name>
    <dbReference type="NCBI Taxonomy" id="8899"/>
</organismHost>
<name>HBEAG_HHBV</name>
<protein>
    <recommendedName>
        <fullName>External core antigen</fullName>
    </recommendedName>
    <alternativeName>
        <fullName>HBeAg</fullName>
    </alternativeName>
    <alternativeName>
        <fullName>Precore protein</fullName>
    </alternativeName>
</protein>